<name>NUOI1_NITOC</name>
<dbReference type="EC" id="7.1.1.-" evidence="1"/>
<dbReference type="EMBL" id="CP000127">
    <property type="protein sequence ID" value="ABA57624.1"/>
    <property type="molecule type" value="Genomic_DNA"/>
</dbReference>
<dbReference type="SMR" id="Q3JC22"/>
<dbReference type="FunCoup" id="Q3JC22">
    <property type="interactions" value="413"/>
</dbReference>
<dbReference type="STRING" id="323261.Noc_1120"/>
<dbReference type="KEGG" id="noc:Noc_1120"/>
<dbReference type="eggNOG" id="COG1143">
    <property type="taxonomic scope" value="Bacteria"/>
</dbReference>
<dbReference type="HOGENOM" id="CLU_067218_4_3_6"/>
<dbReference type="InParanoid" id="Q3JC22"/>
<dbReference type="Proteomes" id="UP000006838">
    <property type="component" value="Chromosome"/>
</dbReference>
<dbReference type="GO" id="GO:0005886">
    <property type="term" value="C:plasma membrane"/>
    <property type="evidence" value="ECO:0007669"/>
    <property type="project" value="UniProtKB-SubCell"/>
</dbReference>
<dbReference type="GO" id="GO:0051539">
    <property type="term" value="F:4 iron, 4 sulfur cluster binding"/>
    <property type="evidence" value="ECO:0007669"/>
    <property type="project" value="UniProtKB-KW"/>
</dbReference>
<dbReference type="GO" id="GO:0005506">
    <property type="term" value="F:iron ion binding"/>
    <property type="evidence" value="ECO:0007669"/>
    <property type="project" value="UniProtKB-UniRule"/>
</dbReference>
<dbReference type="GO" id="GO:0050136">
    <property type="term" value="F:NADH:ubiquinone reductase (non-electrogenic) activity"/>
    <property type="evidence" value="ECO:0007669"/>
    <property type="project" value="UniProtKB-UniRule"/>
</dbReference>
<dbReference type="GO" id="GO:0048038">
    <property type="term" value="F:quinone binding"/>
    <property type="evidence" value="ECO:0007669"/>
    <property type="project" value="UniProtKB-KW"/>
</dbReference>
<dbReference type="GO" id="GO:0009060">
    <property type="term" value="P:aerobic respiration"/>
    <property type="evidence" value="ECO:0007669"/>
    <property type="project" value="TreeGrafter"/>
</dbReference>
<dbReference type="FunFam" id="3.30.70.3270:FF:000002">
    <property type="entry name" value="NADH-quinone oxidoreductase subunit I"/>
    <property type="match status" value="1"/>
</dbReference>
<dbReference type="Gene3D" id="3.30.70.3270">
    <property type="match status" value="1"/>
</dbReference>
<dbReference type="HAMAP" id="MF_01351">
    <property type="entry name" value="NDH1_NuoI"/>
    <property type="match status" value="1"/>
</dbReference>
<dbReference type="InterPro" id="IPR017896">
    <property type="entry name" value="4Fe4S_Fe-S-bd"/>
</dbReference>
<dbReference type="InterPro" id="IPR017900">
    <property type="entry name" value="4Fe4S_Fe_S_CS"/>
</dbReference>
<dbReference type="InterPro" id="IPR010226">
    <property type="entry name" value="NADH_quinone_OxRdtase_chainI"/>
</dbReference>
<dbReference type="NCBIfam" id="TIGR01971">
    <property type="entry name" value="NuoI"/>
    <property type="match status" value="1"/>
</dbReference>
<dbReference type="NCBIfam" id="NF004536">
    <property type="entry name" value="PRK05888.1-1"/>
    <property type="match status" value="1"/>
</dbReference>
<dbReference type="PANTHER" id="PTHR10849:SF20">
    <property type="entry name" value="NADH DEHYDROGENASE [UBIQUINONE] IRON-SULFUR PROTEIN 8, MITOCHONDRIAL"/>
    <property type="match status" value="1"/>
</dbReference>
<dbReference type="PANTHER" id="PTHR10849">
    <property type="entry name" value="NADH DEHYDROGENASE UBIQUINONE IRON-SULFUR PROTEIN 8, MITOCHONDRIAL"/>
    <property type="match status" value="1"/>
</dbReference>
<dbReference type="Pfam" id="PF12838">
    <property type="entry name" value="Fer4_7"/>
    <property type="match status" value="1"/>
</dbReference>
<dbReference type="SUPFAM" id="SSF54862">
    <property type="entry name" value="4Fe-4S ferredoxins"/>
    <property type="match status" value="1"/>
</dbReference>
<dbReference type="PROSITE" id="PS00198">
    <property type="entry name" value="4FE4S_FER_1"/>
    <property type="match status" value="2"/>
</dbReference>
<dbReference type="PROSITE" id="PS51379">
    <property type="entry name" value="4FE4S_FER_2"/>
    <property type="match status" value="2"/>
</dbReference>
<comment type="function">
    <text evidence="1">NDH-1 shuttles electrons from NADH, via FMN and iron-sulfur (Fe-S) centers, to quinones in the respiratory chain. The immediate electron acceptor for the enzyme in this species is believed to be ubiquinone. Couples the redox reaction to proton translocation (for every two electrons transferred, four hydrogen ions are translocated across the cytoplasmic membrane), and thus conserves the redox energy in a proton gradient.</text>
</comment>
<comment type="catalytic activity">
    <reaction evidence="1">
        <text>a quinone + NADH + 5 H(+)(in) = a quinol + NAD(+) + 4 H(+)(out)</text>
        <dbReference type="Rhea" id="RHEA:57888"/>
        <dbReference type="ChEBI" id="CHEBI:15378"/>
        <dbReference type="ChEBI" id="CHEBI:24646"/>
        <dbReference type="ChEBI" id="CHEBI:57540"/>
        <dbReference type="ChEBI" id="CHEBI:57945"/>
        <dbReference type="ChEBI" id="CHEBI:132124"/>
    </reaction>
</comment>
<comment type="cofactor">
    <cofactor evidence="1">
        <name>[4Fe-4S] cluster</name>
        <dbReference type="ChEBI" id="CHEBI:49883"/>
    </cofactor>
    <text evidence="1">Binds 2 [4Fe-4S] clusters per subunit.</text>
</comment>
<comment type="subunit">
    <text evidence="1">NDH-1 is composed of 14 different subunits. Subunits NuoA, H, J, K, L, M, N constitute the membrane sector of the complex.</text>
</comment>
<comment type="subcellular location">
    <subcellularLocation>
        <location evidence="1">Cell inner membrane</location>
        <topology evidence="1">Peripheral membrane protein</topology>
    </subcellularLocation>
</comment>
<comment type="similarity">
    <text evidence="1">Belongs to the complex I 23 kDa subunit family.</text>
</comment>
<organism>
    <name type="scientific">Nitrosococcus oceani (strain ATCC 19707 / BCRC 17464 / JCM 30415 / NCIMB 11848 / C-107)</name>
    <dbReference type="NCBI Taxonomy" id="323261"/>
    <lineage>
        <taxon>Bacteria</taxon>
        <taxon>Pseudomonadati</taxon>
        <taxon>Pseudomonadota</taxon>
        <taxon>Gammaproteobacteria</taxon>
        <taxon>Chromatiales</taxon>
        <taxon>Chromatiaceae</taxon>
        <taxon>Nitrosococcus</taxon>
    </lineage>
</organism>
<protein>
    <recommendedName>
        <fullName evidence="1">NADH-quinone oxidoreductase subunit I 1</fullName>
        <ecNumber evidence="1">7.1.1.-</ecNumber>
    </recommendedName>
    <alternativeName>
        <fullName evidence="1">NADH dehydrogenase I subunit I 1</fullName>
    </alternativeName>
    <alternativeName>
        <fullName evidence="1">NDH-1 subunit I 1</fullName>
    </alternativeName>
</protein>
<reference key="1">
    <citation type="journal article" date="2006" name="Appl. Environ. Microbiol.">
        <title>Complete genome sequence of the marine, chemolithoautotrophic, ammonia-oxidizing bacterium Nitrosococcus oceani ATCC 19707.</title>
        <authorList>
            <person name="Klotz M.G."/>
            <person name="Arp D.J."/>
            <person name="Chain P.S.G."/>
            <person name="El-Sheikh A.F."/>
            <person name="Hauser L.J."/>
            <person name="Hommes N.G."/>
            <person name="Larimer F.W."/>
            <person name="Malfatti S.A."/>
            <person name="Norton J.M."/>
            <person name="Poret-Peterson A.T."/>
            <person name="Vergez L.M."/>
            <person name="Ward B.B."/>
        </authorList>
    </citation>
    <scope>NUCLEOTIDE SEQUENCE [LARGE SCALE GENOMIC DNA]</scope>
    <source>
        <strain>ATCC 19707 / BCRC 17464 / JCM 30415 / NCIMB 11848 / C-107</strain>
    </source>
</reference>
<keyword id="KW-0004">4Fe-4S</keyword>
<keyword id="KW-0997">Cell inner membrane</keyword>
<keyword id="KW-1003">Cell membrane</keyword>
<keyword id="KW-0408">Iron</keyword>
<keyword id="KW-0411">Iron-sulfur</keyword>
<keyword id="KW-0472">Membrane</keyword>
<keyword id="KW-0479">Metal-binding</keyword>
<keyword id="KW-0520">NAD</keyword>
<keyword id="KW-0874">Quinone</keyword>
<keyword id="KW-1185">Reference proteome</keyword>
<keyword id="KW-0677">Repeat</keyword>
<keyword id="KW-1278">Translocase</keyword>
<keyword id="KW-0830">Ubiquinone</keyword>
<proteinExistence type="inferred from homology"/>
<sequence length="180" mass="20665">MLSPLKNISLGSELKSLWTVFLHLFQPKATIQYPEERPYIPPRWRGRIILSRDPDGEERCVACNLCAVACPVDCIALQKTEDEQGRWYPEFFRINFSRCIFCGFCEEACPTYAIQLTPDFEMGEYERPNLVYEKEDLLINGTGKYPDYNFYRVAGMAIGGKTKGEAENEESPVDVRSLMP</sequence>
<evidence type="ECO:0000255" key="1">
    <source>
        <dbReference type="HAMAP-Rule" id="MF_01351"/>
    </source>
</evidence>
<feature type="chain" id="PRO_0000245721" description="NADH-quinone oxidoreductase subunit I 1">
    <location>
        <begin position="1"/>
        <end position="180"/>
    </location>
</feature>
<feature type="domain" description="4Fe-4S ferredoxin-type 1" evidence="1">
    <location>
        <begin position="50"/>
        <end position="80"/>
    </location>
</feature>
<feature type="domain" description="4Fe-4S ferredoxin-type 2" evidence="1">
    <location>
        <begin position="90"/>
        <end position="119"/>
    </location>
</feature>
<feature type="binding site" evidence="1">
    <location>
        <position position="60"/>
    </location>
    <ligand>
        <name>[4Fe-4S] cluster</name>
        <dbReference type="ChEBI" id="CHEBI:49883"/>
        <label>1</label>
    </ligand>
</feature>
<feature type="binding site" evidence="1">
    <location>
        <position position="63"/>
    </location>
    <ligand>
        <name>[4Fe-4S] cluster</name>
        <dbReference type="ChEBI" id="CHEBI:49883"/>
        <label>1</label>
    </ligand>
</feature>
<feature type="binding site" evidence="1">
    <location>
        <position position="66"/>
    </location>
    <ligand>
        <name>[4Fe-4S] cluster</name>
        <dbReference type="ChEBI" id="CHEBI:49883"/>
        <label>1</label>
    </ligand>
</feature>
<feature type="binding site" evidence="1">
    <location>
        <position position="70"/>
    </location>
    <ligand>
        <name>[4Fe-4S] cluster</name>
        <dbReference type="ChEBI" id="CHEBI:49883"/>
        <label>2</label>
    </ligand>
</feature>
<feature type="binding site" evidence="1">
    <location>
        <position position="99"/>
    </location>
    <ligand>
        <name>[4Fe-4S] cluster</name>
        <dbReference type="ChEBI" id="CHEBI:49883"/>
        <label>2</label>
    </ligand>
</feature>
<feature type="binding site" evidence="1">
    <location>
        <position position="102"/>
    </location>
    <ligand>
        <name>[4Fe-4S] cluster</name>
        <dbReference type="ChEBI" id="CHEBI:49883"/>
        <label>2</label>
    </ligand>
</feature>
<feature type="binding site" evidence="1">
    <location>
        <position position="105"/>
    </location>
    <ligand>
        <name>[4Fe-4S] cluster</name>
        <dbReference type="ChEBI" id="CHEBI:49883"/>
        <label>2</label>
    </ligand>
</feature>
<feature type="binding site" evidence="1">
    <location>
        <position position="109"/>
    </location>
    <ligand>
        <name>[4Fe-4S] cluster</name>
        <dbReference type="ChEBI" id="CHEBI:49883"/>
        <label>1</label>
    </ligand>
</feature>
<accession>Q3JC22</accession>
<gene>
    <name evidence="1" type="primary">nuoI1</name>
    <name type="ordered locus">Noc_1120</name>
</gene>